<evidence type="ECO:0000255" key="1">
    <source>
        <dbReference type="HAMAP-Rule" id="MF_00187"/>
    </source>
</evidence>
<dbReference type="EMBL" id="CP000813">
    <property type="protein sequence ID" value="ABV63968.1"/>
    <property type="molecule type" value="Genomic_DNA"/>
</dbReference>
<dbReference type="RefSeq" id="WP_012011536.1">
    <property type="nucleotide sequence ID" value="NC_009848.4"/>
</dbReference>
<dbReference type="SMR" id="A8FIA1"/>
<dbReference type="STRING" id="315750.BPUM_3315"/>
<dbReference type="GeneID" id="5622605"/>
<dbReference type="KEGG" id="bpu:BPUM_3315"/>
<dbReference type="eggNOG" id="COG1526">
    <property type="taxonomic scope" value="Bacteria"/>
</dbReference>
<dbReference type="HOGENOM" id="CLU_056887_4_1_9"/>
<dbReference type="OrthoDB" id="9782042at2"/>
<dbReference type="Proteomes" id="UP000001355">
    <property type="component" value="Chromosome"/>
</dbReference>
<dbReference type="GO" id="GO:0005737">
    <property type="term" value="C:cytoplasm"/>
    <property type="evidence" value="ECO:0007669"/>
    <property type="project" value="UniProtKB-SubCell"/>
</dbReference>
<dbReference type="GO" id="GO:0097163">
    <property type="term" value="F:sulfur carrier activity"/>
    <property type="evidence" value="ECO:0007669"/>
    <property type="project" value="UniProtKB-UniRule"/>
</dbReference>
<dbReference type="GO" id="GO:0016783">
    <property type="term" value="F:sulfurtransferase activity"/>
    <property type="evidence" value="ECO:0007669"/>
    <property type="project" value="InterPro"/>
</dbReference>
<dbReference type="GO" id="GO:0006777">
    <property type="term" value="P:Mo-molybdopterin cofactor biosynthetic process"/>
    <property type="evidence" value="ECO:0007669"/>
    <property type="project" value="UniProtKB-UniRule"/>
</dbReference>
<dbReference type="Gene3D" id="3.10.20.10">
    <property type="match status" value="1"/>
</dbReference>
<dbReference type="Gene3D" id="3.40.140.10">
    <property type="entry name" value="Cytidine Deaminase, domain 2"/>
    <property type="match status" value="1"/>
</dbReference>
<dbReference type="HAMAP" id="MF_00187">
    <property type="entry name" value="FdhD"/>
    <property type="match status" value="1"/>
</dbReference>
<dbReference type="InterPro" id="IPR016193">
    <property type="entry name" value="Cytidine_deaminase-like"/>
</dbReference>
<dbReference type="InterPro" id="IPR003786">
    <property type="entry name" value="FdhD"/>
</dbReference>
<dbReference type="NCBIfam" id="TIGR00129">
    <property type="entry name" value="fdhD_narQ"/>
    <property type="match status" value="1"/>
</dbReference>
<dbReference type="PANTHER" id="PTHR30592">
    <property type="entry name" value="FORMATE DEHYDROGENASE"/>
    <property type="match status" value="1"/>
</dbReference>
<dbReference type="PANTHER" id="PTHR30592:SF1">
    <property type="entry name" value="SULFUR CARRIER PROTEIN FDHD"/>
    <property type="match status" value="1"/>
</dbReference>
<dbReference type="Pfam" id="PF02634">
    <property type="entry name" value="FdhD-NarQ"/>
    <property type="match status" value="1"/>
</dbReference>
<dbReference type="PIRSF" id="PIRSF015626">
    <property type="entry name" value="FdhD"/>
    <property type="match status" value="1"/>
</dbReference>
<dbReference type="SUPFAM" id="SSF53927">
    <property type="entry name" value="Cytidine deaminase-like"/>
    <property type="match status" value="1"/>
</dbReference>
<proteinExistence type="inferred from homology"/>
<accession>A8FIA1</accession>
<keyword id="KW-0963">Cytoplasm</keyword>
<keyword id="KW-0501">Molybdenum cofactor biosynthesis</keyword>
<organism>
    <name type="scientific">Bacillus pumilus (strain SAFR-032)</name>
    <dbReference type="NCBI Taxonomy" id="315750"/>
    <lineage>
        <taxon>Bacteria</taxon>
        <taxon>Bacillati</taxon>
        <taxon>Bacillota</taxon>
        <taxon>Bacilli</taxon>
        <taxon>Bacillales</taxon>
        <taxon>Bacillaceae</taxon>
        <taxon>Bacillus</taxon>
    </lineage>
</organism>
<name>FDHD_BACP2</name>
<feature type="chain" id="PRO_1000058458" description="Sulfur carrier protein FdhD">
    <location>
        <begin position="1"/>
        <end position="262"/>
    </location>
</feature>
<feature type="active site" description="Cysteine persulfide intermediate" evidence="1">
    <location>
        <position position="107"/>
    </location>
</feature>
<protein>
    <recommendedName>
        <fullName evidence="1">Sulfur carrier protein FdhD</fullName>
    </recommendedName>
</protein>
<sequence length="262" mass="29583">MNPSVKKKRVIHQYREGQFTCKTDEVVEEFPLTVIVNGEEFVTLVCSPDHLKELVIGFLASEGVIRFENEIKRFTIDESMGFAYVDLVHSSEFQSSDFTKRVIGSCCGKGRHFYFLQDVKTAKTAIDRINISADTCMRLMKSLQEESQLFQHTGGVHNAGLCDTEKLFITRTDIGRHNALDKIYGYCLLHQIPLRDKILVFSGRISSEVLLKAAKLGVSIVISKSAPTELALNMAEELNITTVGFVRGESFNIYTHHQRITE</sequence>
<comment type="function">
    <text evidence="1">Required for formate dehydrogenase (FDH) activity. Acts as a sulfur carrier protein that transfers sulfur from IscS to the molybdenum cofactor prior to its insertion into FDH.</text>
</comment>
<comment type="subcellular location">
    <subcellularLocation>
        <location evidence="1">Cytoplasm</location>
    </subcellularLocation>
</comment>
<comment type="similarity">
    <text evidence="1">Belongs to the FdhD family.</text>
</comment>
<gene>
    <name evidence="1" type="primary">fdhD</name>
    <name type="ordered locus">BPUM_3315</name>
</gene>
<reference key="1">
    <citation type="journal article" date="2007" name="PLoS ONE">
        <title>Paradoxical DNA repair and peroxide resistance gene conservation in Bacillus pumilus SAFR-032.</title>
        <authorList>
            <person name="Gioia J."/>
            <person name="Yerrapragada S."/>
            <person name="Qin X."/>
            <person name="Jiang H."/>
            <person name="Igboeli O.C."/>
            <person name="Muzny D."/>
            <person name="Dugan-Rocha S."/>
            <person name="Ding Y."/>
            <person name="Hawes A."/>
            <person name="Liu W."/>
            <person name="Perez L."/>
            <person name="Kovar C."/>
            <person name="Dinh H."/>
            <person name="Lee S."/>
            <person name="Nazareth L."/>
            <person name="Blyth P."/>
            <person name="Holder M."/>
            <person name="Buhay C."/>
            <person name="Tirumalai M.R."/>
            <person name="Liu Y."/>
            <person name="Dasgupta I."/>
            <person name="Bokhetache L."/>
            <person name="Fujita M."/>
            <person name="Karouia F."/>
            <person name="Eswara Moorthy P."/>
            <person name="Siefert J."/>
            <person name="Uzman A."/>
            <person name="Buzumbo P."/>
            <person name="Verma A."/>
            <person name="Zwiya H."/>
            <person name="McWilliams B.D."/>
            <person name="Olowu A."/>
            <person name="Clinkenbeard K.D."/>
            <person name="Newcombe D."/>
            <person name="Golebiewski L."/>
            <person name="Petrosino J.F."/>
            <person name="Nicholson W.L."/>
            <person name="Fox G.E."/>
            <person name="Venkateswaran K."/>
            <person name="Highlander S.K."/>
            <person name="Weinstock G.M."/>
        </authorList>
    </citation>
    <scope>NUCLEOTIDE SEQUENCE [LARGE SCALE GENOMIC DNA]</scope>
    <source>
        <strain>SAFR-032</strain>
    </source>
</reference>